<keyword id="KW-0274">FAD</keyword>
<keyword id="KW-0285">Flavoprotein</keyword>
<keyword id="KW-0560">Oxidoreductase</keyword>
<protein>
    <recommendedName>
        <fullName evidence="3">FAD-linked oxidoreductase sthB</fullName>
        <ecNumber evidence="5">1.-.-.-</ecNumber>
    </recommendedName>
    <alternativeName>
        <fullName evidence="3">FAD-dependent BBE enzyme-like protein</fullName>
    </alternativeName>
    <alternativeName>
        <fullName evidence="3">Stemphyloxin II biosynthesis cluster protein B</fullName>
    </alternativeName>
</protein>
<evidence type="ECO:0000255" key="1">
    <source>
        <dbReference type="PROSITE-ProRule" id="PRU00718"/>
    </source>
</evidence>
<evidence type="ECO:0000269" key="2">
    <source>
    </source>
</evidence>
<evidence type="ECO:0000303" key="3">
    <source>
    </source>
</evidence>
<evidence type="ECO:0000305" key="4"/>
<evidence type="ECO:0000305" key="5">
    <source>
    </source>
</evidence>
<name>STHB_PHANO</name>
<feature type="chain" id="PRO_0000448657" description="FAD-linked oxidoreductase sthB">
    <location>
        <begin position="1"/>
        <end position="315"/>
    </location>
</feature>
<feature type="domain" description="FAD-binding PCMH-type" evidence="1">
    <location>
        <begin position="19"/>
        <end position="201"/>
    </location>
</feature>
<organism>
    <name type="scientific">Phaeosphaeria nodorum (strain SN15 / ATCC MYA-4574 / FGSC 10173)</name>
    <name type="common">Glume blotch fungus</name>
    <name type="synonym">Parastagonospora nodorum</name>
    <dbReference type="NCBI Taxonomy" id="321614"/>
    <lineage>
        <taxon>Eukaryota</taxon>
        <taxon>Fungi</taxon>
        <taxon>Dikarya</taxon>
        <taxon>Ascomycota</taxon>
        <taxon>Pezizomycotina</taxon>
        <taxon>Dothideomycetes</taxon>
        <taxon>Pleosporomycetidae</taxon>
        <taxon>Pleosporales</taxon>
        <taxon>Pleosporineae</taxon>
        <taxon>Phaeosphaeriaceae</taxon>
        <taxon>Parastagonospora</taxon>
    </lineage>
</organism>
<proteinExistence type="evidence at protein level"/>
<reference key="1">
    <citation type="journal article" date="2007" name="Plant Cell">
        <title>Dothideomycete-plant interactions illuminated by genome sequencing and EST analysis of the wheat pathogen Stagonospora nodorum.</title>
        <authorList>
            <person name="Hane J.K."/>
            <person name="Lowe R.G.T."/>
            <person name="Solomon P.S."/>
            <person name="Tan K.-C."/>
            <person name="Schoch C.L."/>
            <person name="Spatafora J.W."/>
            <person name="Crous P.W."/>
            <person name="Kodira C.D."/>
            <person name="Birren B.W."/>
            <person name="Galagan J.E."/>
            <person name="Torriani S.F.F."/>
            <person name="McDonald B.A."/>
            <person name="Oliver R.P."/>
        </authorList>
    </citation>
    <scope>NUCLEOTIDE SEQUENCE [LARGE SCALE GENOMIC DNA]</scope>
    <source>
        <strain>SN15 / ATCC MYA-4574 / FGSC 10173</strain>
    </source>
</reference>
<reference key="2">
    <citation type="journal article" date="2019" name="Chemistry">
        <title>Biosynthesis of a Tricyclo[6.2.2.02,7]dodecane System by a Berberine Bridge Enzyme-like Intramolecular Aldolase.</title>
        <authorList>
            <person name="Li H."/>
            <person name="Hu J."/>
            <person name="Wei H."/>
            <person name="Solomon P.S."/>
            <person name="Stubbs K.A."/>
            <person name="Chooi Y.H."/>
        </authorList>
    </citation>
    <scope>FUNCTION</scope>
    <scope>CATALYTIC ACTIVITY</scope>
    <scope>PATHWAY</scope>
</reference>
<sequence>MMNPFFQNTSCSPYYRTDQPCSLGNYVSYAIPVAGVADIVAAINFTQTHNVRLVIKNTGHDYMGKSTGRGALSLWTHNLKSRQLVNYSSAHYTGPAIKVGAGVTGGEALVHASASGYRIVSGDCPTVGYSGGYSSGGGHSILNSVHGLAADNVLEWEVVTADGRHVVASPDQNSDLYWAMSGGGGGTFAVALSMTSRVHADSIIGAASLSFNATSAPSNDSFVSALNAWWAFLPSLVDVGATPSWNIFAGNFLVPNTTAPGRTAADMDTLYSPFLSELKRLGIPYAFESFSAPNYLQHYNDTDGPLPDGPLAAWA</sequence>
<comment type="function">
    <text evidence="2">FAD-linked oxidoreductase; part of the gene cluster that mediates the biosynthesis of the phytotoxin stemphyloxin II (PubMed:31553484). The first step of the pathway is the synthesis of dehydroprobetaenone I by the polyketide synthase sthA and the enoyl reductase sthE via condensation of one acetyl-CoA starter unit with 7 malonyl-CoA units and 5 methylations (PubMed:31553484). The C-terminal reductase (R) domain of sthA catalyzes the reductive release of the polyketide chain (PubMed:31553484). Because sthA lacks a designated enoylreductase (ER) domain, the required activity is provided the enoyl reductase sthE (PubMed:31553484). The short-chain dehydrogenase/reductase sthC then catalyzes reduction of dehydroprobetaenone I to probetaenone I (PubMed:31553484). The cytochrome P450 monooxygenase sthF catalyzes successive epoxidation, oxidation (resulting from epoxide opening) and hydroxylation to install a tertiary alcohol in the decaline ring to yield betaenone C from dehydroprobetaenone I and betaenone B from probetaenone I (PubMed:31553484). The FAD-linked oxidoreductase sthB is responsible for the conversion of betaenone C to betaenone A via an intramolecular aldol reaction between C-1 and C-17 to form the bridged tricyclic system in betaenone A (PubMed:31553484). Finally, the cytochrome P450 monooxygenase sthD catalyzes the hydroxylation of C-15 to afford the final metabolite stemphyloxin II (PubMed:31553484).</text>
</comment>
<comment type="catalytic activity">
    <reaction evidence="2">
        <text>betaenone C = betaenone A</text>
        <dbReference type="Rhea" id="RHEA:61896"/>
        <dbReference type="ChEBI" id="CHEBI:145053"/>
        <dbReference type="ChEBI" id="CHEBI:145055"/>
    </reaction>
    <physiologicalReaction direction="left-to-right" evidence="2">
        <dbReference type="Rhea" id="RHEA:61897"/>
    </physiologicalReaction>
</comment>
<comment type="catalytic activity">
    <reaction evidence="2">
        <text>stemphyloxin I = stemphyloxin II</text>
        <dbReference type="Rhea" id="RHEA:62716"/>
        <dbReference type="ChEBI" id="CHEBI:145066"/>
        <dbReference type="ChEBI" id="CHEBI:145070"/>
    </reaction>
    <physiologicalReaction direction="left-to-right" evidence="2">
        <dbReference type="Rhea" id="RHEA:62717"/>
    </physiologicalReaction>
</comment>
<comment type="pathway">
    <text evidence="2">Mycotoxin biosynthesis.</text>
</comment>
<comment type="similarity">
    <text evidence="4">Belongs to the oxygen-dependent FAD-linked oxidoreductase family.</text>
</comment>
<dbReference type="EC" id="1.-.-.-" evidence="5"/>
<dbReference type="EMBL" id="CH445335">
    <property type="protein sequence ID" value="EAT85327.2"/>
    <property type="molecule type" value="Genomic_DNA"/>
</dbReference>
<dbReference type="RefSeq" id="XP_001798188.1">
    <property type="nucleotide sequence ID" value="XM_001798136.1"/>
</dbReference>
<dbReference type="SMR" id="Q0UK53"/>
<dbReference type="STRING" id="321614.Q0UK53"/>
<dbReference type="EnsemblFungi" id="SNOT_07861">
    <property type="protein sequence ID" value="SNOT_07861"/>
    <property type="gene ID" value="SNOG_07861"/>
</dbReference>
<dbReference type="GeneID" id="5975081"/>
<dbReference type="KEGG" id="pno:SNOG_07861"/>
<dbReference type="VEuPathDB" id="FungiDB:JI435_078610"/>
<dbReference type="eggNOG" id="ENOG502R8I5">
    <property type="taxonomic scope" value="Eukaryota"/>
</dbReference>
<dbReference type="HOGENOM" id="CLU_018354_4_2_1"/>
<dbReference type="InParanoid" id="Q0UK53"/>
<dbReference type="Proteomes" id="UP000001055">
    <property type="component" value="Unassembled WGS sequence"/>
</dbReference>
<dbReference type="GO" id="GO:0071949">
    <property type="term" value="F:FAD binding"/>
    <property type="evidence" value="ECO:0007669"/>
    <property type="project" value="InterPro"/>
</dbReference>
<dbReference type="GO" id="GO:0016491">
    <property type="term" value="F:oxidoreductase activity"/>
    <property type="evidence" value="ECO:0000318"/>
    <property type="project" value="GO_Central"/>
</dbReference>
<dbReference type="Gene3D" id="3.30.465.10">
    <property type="match status" value="1"/>
</dbReference>
<dbReference type="InterPro" id="IPR016166">
    <property type="entry name" value="FAD-bd_PCMH"/>
</dbReference>
<dbReference type="InterPro" id="IPR036318">
    <property type="entry name" value="FAD-bd_PCMH-like_sf"/>
</dbReference>
<dbReference type="InterPro" id="IPR016169">
    <property type="entry name" value="FAD-bd_PCMH_sub2"/>
</dbReference>
<dbReference type="InterPro" id="IPR050432">
    <property type="entry name" value="FAD-linked_Oxidoreductases_BP"/>
</dbReference>
<dbReference type="InterPro" id="IPR006094">
    <property type="entry name" value="Oxid_FAD_bind_N"/>
</dbReference>
<dbReference type="PANTHER" id="PTHR13878:SF91">
    <property type="entry name" value="FAD BINDING DOMAIN PROTEIN (AFU_ORTHOLOGUE AFUA_6G12070)-RELATED"/>
    <property type="match status" value="1"/>
</dbReference>
<dbReference type="PANTHER" id="PTHR13878">
    <property type="entry name" value="GULONOLACTONE OXIDASE"/>
    <property type="match status" value="1"/>
</dbReference>
<dbReference type="Pfam" id="PF01565">
    <property type="entry name" value="FAD_binding_4"/>
    <property type="match status" value="1"/>
</dbReference>
<dbReference type="SUPFAM" id="SSF56176">
    <property type="entry name" value="FAD-binding/transporter-associated domain-like"/>
    <property type="match status" value="1"/>
</dbReference>
<dbReference type="PROSITE" id="PS51387">
    <property type="entry name" value="FAD_PCMH"/>
    <property type="match status" value="1"/>
</dbReference>
<gene>
    <name evidence="3" type="primary">sthB</name>
    <name type="ORF">SNOG_07861</name>
</gene>
<accession>Q0UK53</accession>